<comment type="function">
    <text evidence="1">Participates actively in the response to hyperosmotic and heat shock by preventing the aggregation of stress-denatured proteins, in association with DnaK and GrpE. It is the nucleotide exchange factor for DnaK and may function as a thermosensor. Unfolded proteins bind initially to DnaJ; upon interaction with the DnaJ-bound protein, DnaK hydrolyzes its bound ATP, resulting in the formation of a stable complex. GrpE releases ADP from DnaK; ATP binding to DnaK triggers the release of the substrate protein, thus completing the reaction cycle. Several rounds of ATP-dependent interactions between DnaJ, DnaK and GrpE are required for fully efficient folding.</text>
</comment>
<comment type="subunit">
    <text evidence="1">Homodimer.</text>
</comment>
<comment type="subcellular location">
    <subcellularLocation>
        <location evidence="1">Cytoplasm</location>
    </subcellularLocation>
</comment>
<comment type="similarity">
    <text evidence="1">Belongs to the GrpE family.</text>
</comment>
<protein>
    <recommendedName>
        <fullName evidence="1">Protein GrpE</fullName>
    </recommendedName>
    <alternativeName>
        <fullName evidence="1">HSP-70 cofactor</fullName>
    </alternativeName>
</protein>
<proteinExistence type="inferred from homology"/>
<accession>Q71ZJ6</accession>
<keyword id="KW-0143">Chaperone</keyword>
<keyword id="KW-0963">Cytoplasm</keyword>
<keyword id="KW-0346">Stress response</keyword>
<reference key="1">
    <citation type="journal article" date="2004" name="Nucleic Acids Res.">
        <title>Whole genome comparisons of serotype 4b and 1/2a strains of the food-borne pathogen Listeria monocytogenes reveal new insights into the core genome components of this species.</title>
        <authorList>
            <person name="Nelson K.E."/>
            <person name="Fouts D.E."/>
            <person name="Mongodin E.F."/>
            <person name="Ravel J."/>
            <person name="DeBoy R.T."/>
            <person name="Kolonay J.F."/>
            <person name="Rasko D.A."/>
            <person name="Angiuoli S.V."/>
            <person name="Gill S.R."/>
            <person name="Paulsen I.T."/>
            <person name="Peterson J.D."/>
            <person name="White O."/>
            <person name="Nelson W.C."/>
            <person name="Nierman W.C."/>
            <person name="Beanan M.J."/>
            <person name="Brinkac L.M."/>
            <person name="Daugherty S.C."/>
            <person name="Dodson R.J."/>
            <person name="Durkin A.S."/>
            <person name="Madupu R."/>
            <person name="Haft D.H."/>
            <person name="Selengut J."/>
            <person name="Van Aken S.E."/>
            <person name="Khouri H.M."/>
            <person name="Fedorova N."/>
            <person name="Forberger H.A."/>
            <person name="Tran B."/>
            <person name="Kathariou S."/>
            <person name="Wonderling L.D."/>
            <person name="Uhlich G.A."/>
            <person name="Bayles D.O."/>
            <person name="Luchansky J.B."/>
            <person name="Fraser C.M."/>
        </authorList>
    </citation>
    <scope>NUCLEOTIDE SEQUENCE [LARGE SCALE GENOMIC DNA]</scope>
    <source>
        <strain>F2365</strain>
    </source>
</reference>
<evidence type="ECO:0000255" key="1">
    <source>
        <dbReference type="HAMAP-Rule" id="MF_01151"/>
    </source>
</evidence>
<gene>
    <name evidence="1" type="primary">grpE</name>
    <name type="ordered locus">LMOf2365_1493</name>
</gene>
<organism>
    <name type="scientific">Listeria monocytogenes serotype 4b (strain F2365)</name>
    <dbReference type="NCBI Taxonomy" id="265669"/>
    <lineage>
        <taxon>Bacteria</taxon>
        <taxon>Bacillati</taxon>
        <taxon>Bacillota</taxon>
        <taxon>Bacilli</taxon>
        <taxon>Bacillales</taxon>
        <taxon>Listeriaceae</taxon>
        <taxon>Listeria</taxon>
    </lineage>
</organism>
<sequence>MSEKKNKKERLADEIEQEELNILDETEETVEEEAAADTLTEEQAKILELENKLDEVENRYLRMQADFENVKKRHIADRDASQKYRSQSLAQDLLPALDSFEKALATTSDQEEVKQILKGMEMVYNQILVAFEKEGIEVIPAVGEQFDPNFHQAVMQDSDENAGSNEITAELQKGYKLKDRVIRPSMVKVNQ</sequence>
<name>GRPE_LISMF</name>
<dbReference type="EMBL" id="AE017262">
    <property type="protein sequence ID" value="AAT04268.1"/>
    <property type="molecule type" value="Genomic_DNA"/>
</dbReference>
<dbReference type="RefSeq" id="WP_003726025.1">
    <property type="nucleotide sequence ID" value="NC_002973.6"/>
</dbReference>
<dbReference type="SMR" id="Q71ZJ6"/>
<dbReference type="KEGG" id="lmf:LMOf2365_1493"/>
<dbReference type="HOGENOM" id="CLU_057217_5_2_9"/>
<dbReference type="GO" id="GO:0005737">
    <property type="term" value="C:cytoplasm"/>
    <property type="evidence" value="ECO:0007669"/>
    <property type="project" value="UniProtKB-SubCell"/>
</dbReference>
<dbReference type="GO" id="GO:0000774">
    <property type="term" value="F:adenyl-nucleotide exchange factor activity"/>
    <property type="evidence" value="ECO:0007669"/>
    <property type="project" value="InterPro"/>
</dbReference>
<dbReference type="GO" id="GO:0042803">
    <property type="term" value="F:protein homodimerization activity"/>
    <property type="evidence" value="ECO:0007669"/>
    <property type="project" value="InterPro"/>
</dbReference>
<dbReference type="GO" id="GO:0051087">
    <property type="term" value="F:protein-folding chaperone binding"/>
    <property type="evidence" value="ECO:0007669"/>
    <property type="project" value="InterPro"/>
</dbReference>
<dbReference type="GO" id="GO:0051082">
    <property type="term" value="F:unfolded protein binding"/>
    <property type="evidence" value="ECO:0007669"/>
    <property type="project" value="TreeGrafter"/>
</dbReference>
<dbReference type="GO" id="GO:0006457">
    <property type="term" value="P:protein folding"/>
    <property type="evidence" value="ECO:0007669"/>
    <property type="project" value="InterPro"/>
</dbReference>
<dbReference type="CDD" id="cd00446">
    <property type="entry name" value="GrpE"/>
    <property type="match status" value="1"/>
</dbReference>
<dbReference type="FunFam" id="2.30.22.10:FF:000001">
    <property type="entry name" value="Protein GrpE"/>
    <property type="match status" value="1"/>
</dbReference>
<dbReference type="FunFam" id="3.90.20.20:FF:000002">
    <property type="entry name" value="Protein GrpE"/>
    <property type="match status" value="1"/>
</dbReference>
<dbReference type="Gene3D" id="3.90.20.20">
    <property type="match status" value="1"/>
</dbReference>
<dbReference type="Gene3D" id="2.30.22.10">
    <property type="entry name" value="Head domain of nucleotide exchange factor GrpE"/>
    <property type="match status" value="1"/>
</dbReference>
<dbReference type="HAMAP" id="MF_01151">
    <property type="entry name" value="GrpE"/>
    <property type="match status" value="1"/>
</dbReference>
<dbReference type="InterPro" id="IPR000740">
    <property type="entry name" value="GrpE"/>
</dbReference>
<dbReference type="InterPro" id="IPR013805">
    <property type="entry name" value="GrpE_coiled_coil"/>
</dbReference>
<dbReference type="InterPro" id="IPR009012">
    <property type="entry name" value="GrpE_head"/>
</dbReference>
<dbReference type="NCBIfam" id="NF010738">
    <property type="entry name" value="PRK14140.1"/>
    <property type="match status" value="1"/>
</dbReference>
<dbReference type="PANTHER" id="PTHR21237">
    <property type="entry name" value="GRPE PROTEIN"/>
    <property type="match status" value="1"/>
</dbReference>
<dbReference type="PANTHER" id="PTHR21237:SF23">
    <property type="entry name" value="GRPE PROTEIN HOMOLOG, MITOCHONDRIAL"/>
    <property type="match status" value="1"/>
</dbReference>
<dbReference type="Pfam" id="PF01025">
    <property type="entry name" value="GrpE"/>
    <property type="match status" value="1"/>
</dbReference>
<dbReference type="PRINTS" id="PR00773">
    <property type="entry name" value="GRPEPROTEIN"/>
</dbReference>
<dbReference type="SUPFAM" id="SSF58014">
    <property type="entry name" value="Coiled-coil domain of nucleotide exchange factor GrpE"/>
    <property type="match status" value="1"/>
</dbReference>
<dbReference type="SUPFAM" id="SSF51064">
    <property type="entry name" value="Head domain of nucleotide exchange factor GrpE"/>
    <property type="match status" value="1"/>
</dbReference>
<dbReference type="PROSITE" id="PS01071">
    <property type="entry name" value="GRPE"/>
    <property type="match status" value="1"/>
</dbReference>
<feature type="chain" id="PRO_0000113808" description="Protein GrpE">
    <location>
        <begin position="1"/>
        <end position="191"/>
    </location>
</feature>